<proteinExistence type="inferred from homology"/>
<protein>
    <recommendedName>
        <fullName evidence="4">Cytochrome P450 monooxygenase avaH</fullName>
        <ecNumber evidence="6">1.-.-.-</ecNumber>
    </recommendedName>
    <alternativeName>
        <fullName evidence="4">Ava biosynthesis cluster protein H</fullName>
    </alternativeName>
</protein>
<sequence>MALSQAVTSRASVFKSKTWIDTGYRLHSRENKPFMVSSLLEEPSLVVLPPSMTTELILAKETDLSFWHALDDIVFSEHAFYSTRILSLPLQTTIIRRHLASGAQRFMPAVVRQLRNTLDREWGSGKPKQWRSVNLFNSLLNVVNNMVSVVFVGTDLANDQDFQTSITKHTEQVFLTMSVLRMEVESKLMPLIMERLKNSSELKAGQDKPDDLLQWLIDCQTSLKDPAERAIELEPSLIVTRVLMSYFVSVFLVNVALFNAVSIMGRLPEADYWSEIYTEARKILDVDEHGWTKEKVDKLWKTESFVKETMRFVGDACFEMRRKVMAPTGINLSDGTHLPFGTTVGLPSNAIHNDDRFYPQATSFDGLRFLKLRESDDGNTARGSLLTATSNTFLQFGHGRHGCPGRFLAADILKLILAEMTLRYEIKWDEKPEESSWFGNSLLPGQNTVVSVCPRD</sequence>
<accession>P9WEK9</accession>
<evidence type="ECO:0000250" key="1">
    <source>
        <dbReference type="UniProtKB" id="P04798"/>
    </source>
</evidence>
<evidence type="ECO:0000255" key="2"/>
<evidence type="ECO:0000269" key="3">
    <source>
    </source>
</evidence>
<evidence type="ECO:0000303" key="4">
    <source>
    </source>
</evidence>
<evidence type="ECO:0000305" key="5"/>
<evidence type="ECO:0000305" key="6">
    <source>
    </source>
</evidence>
<dbReference type="EC" id="1.-.-.-" evidence="6"/>
<dbReference type="EMBL" id="OP596311">
    <property type="protein sequence ID" value="UZP48220.1"/>
    <property type="molecule type" value="Genomic_DNA"/>
</dbReference>
<dbReference type="SMR" id="P9WEK9"/>
<dbReference type="GO" id="GO:0016020">
    <property type="term" value="C:membrane"/>
    <property type="evidence" value="ECO:0007669"/>
    <property type="project" value="UniProtKB-SubCell"/>
</dbReference>
<dbReference type="GO" id="GO:0020037">
    <property type="term" value="F:heme binding"/>
    <property type="evidence" value="ECO:0007669"/>
    <property type="project" value="InterPro"/>
</dbReference>
<dbReference type="GO" id="GO:0005506">
    <property type="term" value="F:iron ion binding"/>
    <property type="evidence" value="ECO:0007669"/>
    <property type="project" value="InterPro"/>
</dbReference>
<dbReference type="GO" id="GO:0004497">
    <property type="term" value="F:monooxygenase activity"/>
    <property type="evidence" value="ECO:0007669"/>
    <property type="project" value="UniProtKB-KW"/>
</dbReference>
<dbReference type="GO" id="GO:0016705">
    <property type="term" value="F:oxidoreductase activity, acting on paired donors, with incorporation or reduction of molecular oxygen"/>
    <property type="evidence" value="ECO:0007669"/>
    <property type="project" value="InterPro"/>
</dbReference>
<dbReference type="GO" id="GO:0019748">
    <property type="term" value="P:secondary metabolic process"/>
    <property type="evidence" value="ECO:0007669"/>
    <property type="project" value="UniProtKB-ARBA"/>
</dbReference>
<dbReference type="CDD" id="cd11041">
    <property type="entry name" value="CYP503A1-like"/>
    <property type="match status" value="1"/>
</dbReference>
<dbReference type="Gene3D" id="1.10.630.10">
    <property type="entry name" value="Cytochrome P450"/>
    <property type="match status" value="1"/>
</dbReference>
<dbReference type="InterPro" id="IPR001128">
    <property type="entry name" value="Cyt_P450"/>
</dbReference>
<dbReference type="InterPro" id="IPR017972">
    <property type="entry name" value="Cyt_P450_CS"/>
</dbReference>
<dbReference type="InterPro" id="IPR002403">
    <property type="entry name" value="Cyt_P450_E_grp-IV"/>
</dbReference>
<dbReference type="InterPro" id="IPR036396">
    <property type="entry name" value="Cyt_P450_sf"/>
</dbReference>
<dbReference type="PANTHER" id="PTHR46206">
    <property type="entry name" value="CYTOCHROME P450"/>
    <property type="match status" value="1"/>
</dbReference>
<dbReference type="PANTHER" id="PTHR46206:SF1">
    <property type="entry name" value="P450, PUTATIVE (EUROFUNG)-RELATED"/>
    <property type="match status" value="1"/>
</dbReference>
<dbReference type="Pfam" id="PF00067">
    <property type="entry name" value="p450"/>
    <property type="match status" value="1"/>
</dbReference>
<dbReference type="PRINTS" id="PR00465">
    <property type="entry name" value="EP450IV"/>
</dbReference>
<dbReference type="SUPFAM" id="SSF48264">
    <property type="entry name" value="Cytochrome P450"/>
    <property type="match status" value="1"/>
</dbReference>
<dbReference type="PROSITE" id="PS00086">
    <property type="entry name" value="CYTOCHROME_P450"/>
    <property type="match status" value="1"/>
</dbReference>
<keyword id="KW-0349">Heme</keyword>
<keyword id="KW-0408">Iron</keyword>
<keyword id="KW-0472">Membrane</keyword>
<keyword id="KW-0479">Metal-binding</keyword>
<keyword id="KW-0503">Monooxygenase</keyword>
<keyword id="KW-0560">Oxidoreductase</keyword>
<keyword id="KW-0812">Transmembrane</keyword>
<keyword id="KW-1133">Transmembrane helix</keyword>
<name>AVAH_ASPVE</name>
<organism>
    <name type="scientific">Aspergillus versicolor</name>
    <dbReference type="NCBI Taxonomy" id="46472"/>
    <lineage>
        <taxon>Eukaryota</taxon>
        <taxon>Fungi</taxon>
        <taxon>Dikarya</taxon>
        <taxon>Ascomycota</taxon>
        <taxon>Pezizomycotina</taxon>
        <taxon>Eurotiomycetes</taxon>
        <taxon>Eurotiomycetidae</taxon>
        <taxon>Eurotiales</taxon>
        <taxon>Aspergillaceae</taxon>
        <taxon>Aspergillus</taxon>
        <taxon>Aspergillus subgen. Nidulantes</taxon>
    </lineage>
</organism>
<gene>
    <name evidence="4" type="primary">avaH</name>
</gene>
<comment type="function">
    <text evidence="3">Cytochrome P450 monooxygenase; part of the cluster that mediates the biosynthesis of a highly modified cyclo-arginine-tryptophan dipeptide (cRW) (PubMed:36702957). The first step of the pathway is perfornmed by the arginine-containing cyclodipeptide synthase (RCPDS) avaA that acts as the scaffold-generating enzyme and is responsible for formation of the cyclo-Arg-Trp (cRW) diketopiperazine. AvaB then acts as a multifunctional flavoenzyme that is responsible for generating the cyclo-Arg-formylkynurenine DKP, which can be deformylated by avaC. AvaB then further catalyzes an additional N-oxidation followed by cyclization and dehydration. The next step is an N-acetylation of the guanidine group catalyzed by the arginine N-acetyltransferase avaD. The roles of the additional enzymes identified within the ava cluster still have to be determined (PubMed:36702957).</text>
</comment>
<comment type="cofactor">
    <cofactor evidence="1">
        <name>heme</name>
        <dbReference type="ChEBI" id="CHEBI:30413"/>
    </cofactor>
</comment>
<comment type="pathway">
    <text evidence="6">Secondary metabolite biosynthesis.</text>
</comment>
<comment type="subcellular location">
    <subcellularLocation>
        <location evidence="2">Membrane</location>
        <topology evidence="2">Single-pass membrane protein</topology>
    </subcellularLocation>
</comment>
<comment type="similarity">
    <text evidence="5">Belongs to the cytochrome P450 family.</text>
</comment>
<reference key="1">
    <citation type="journal article" date="2023" name="Nat. Chem. Biol.">
        <title>Genome mining for unknown-unknown natural products.</title>
        <authorList>
            <person name="Yee D.A."/>
            <person name="Niwa K."/>
            <person name="Perlatti B."/>
            <person name="Chen M."/>
            <person name="Li Y."/>
            <person name="Tang Y."/>
        </authorList>
    </citation>
    <scope>NUCLEOTIDE SEQUENCE [GENOMIC DNA]</scope>
    <scope>FUNCTION</scope>
    <source>
        <strain>dI-29</strain>
    </source>
</reference>
<feature type="chain" id="PRO_0000461010" description="Cytochrome P450 monooxygenase avaH">
    <location>
        <begin position="1"/>
        <end position="456"/>
    </location>
</feature>
<feature type="transmembrane region" description="Helical" evidence="2">
    <location>
        <begin position="243"/>
        <end position="263"/>
    </location>
</feature>
<feature type="binding site" description="axial binding residue" evidence="1">
    <location>
        <position position="403"/>
    </location>
    <ligand>
        <name>heme</name>
        <dbReference type="ChEBI" id="CHEBI:30413"/>
    </ligand>
    <ligandPart>
        <name>Fe</name>
        <dbReference type="ChEBI" id="CHEBI:18248"/>
    </ligandPart>
</feature>